<organism>
    <name type="scientific">Methanococcus maripaludis (strain C7 / ATCC BAA-1331)</name>
    <dbReference type="NCBI Taxonomy" id="426368"/>
    <lineage>
        <taxon>Archaea</taxon>
        <taxon>Methanobacteriati</taxon>
        <taxon>Methanobacteriota</taxon>
        <taxon>Methanomada group</taxon>
        <taxon>Methanococci</taxon>
        <taxon>Methanococcales</taxon>
        <taxon>Methanococcaceae</taxon>
        <taxon>Methanococcus</taxon>
    </lineage>
</organism>
<name>PURT_METM7</name>
<dbReference type="EC" id="6.3.1.21" evidence="1"/>
<dbReference type="EMBL" id="CP000745">
    <property type="protein sequence ID" value="ABR66188.1"/>
    <property type="molecule type" value="Genomic_DNA"/>
</dbReference>
<dbReference type="SMR" id="A6VIB2"/>
<dbReference type="STRING" id="426368.MmarC7_1122"/>
<dbReference type="KEGG" id="mmz:MmarC7_1122"/>
<dbReference type="eggNOG" id="arCOG01598">
    <property type="taxonomic scope" value="Archaea"/>
</dbReference>
<dbReference type="HOGENOM" id="CLU_011534_1_3_2"/>
<dbReference type="OrthoDB" id="9299at2157"/>
<dbReference type="UniPathway" id="UPA00074">
    <property type="reaction ID" value="UER00127"/>
</dbReference>
<dbReference type="GO" id="GO:0005829">
    <property type="term" value="C:cytosol"/>
    <property type="evidence" value="ECO:0007669"/>
    <property type="project" value="TreeGrafter"/>
</dbReference>
<dbReference type="GO" id="GO:0005524">
    <property type="term" value="F:ATP binding"/>
    <property type="evidence" value="ECO:0007669"/>
    <property type="project" value="UniProtKB-UniRule"/>
</dbReference>
<dbReference type="GO" id="GO:0000287">
    <property type="term" value="F:magnesium ion binding"/>
    <property type="evidence" value="ECO:0007669"/>
    <property type="project" value="InterPro"/>
</dbReference>
<dbReference type="GO" id="GO:0043815">
    <property type="term" value="F:phosphoribosylglycinamide formyltransferase 2 activity"/>
    <property type="evidence" value="ECO:0007669"/>
    <property type="project" value="UniProtKB-UniRule"/>
</dbReference>
<dbReference type="GO" id="GO:0004644">
    <property type="term" value="F:phosphoribosylglycinamide formyltransferase activity"/>
    <property type="evidence" value="ECO:0007669"/>
    <property type="project" value="InterPro"/>
</dbReference>
<dbReference type="GO" id="GO:0006189">
    <property type="term" value="P:'de novo' IMP biosynthetic process"/>
    <property type="evidence" value="ECO:0007669"/>
    <property type="project" value="UniProtKB-UniRule"/>
</dbReference>
<dbReference type="FunFam" id="3.30.1490.20:FF:000013">
    <property type="entry name" value="Formate-dependent phosphoribosylglycinamide formyltransferase"/>
    <property type="match status" value="1"/>
</dbReference>
<dbReference type="FunFam" id="3.40.50.20:FF:000007">
    <property type="entry name" value="Formate-dependent phosphoribosylglycinamide formyltransferase"/>
    <property type="match status" value="1"/>
</dbReference>
<dbReference type="Gene3D" id="3.40.50.20">
    <property type="match status" value="1"/>
</dbReference>
<dbReference type="Gene3D" id="3.30.1490.20">
    <property type="entry name" value="ATP-grasp fold, A domain"/>
    <property type="match status" value="1"/>
</dbReference>
<dbReference type="Gene3D" id="3.30.470.20">
    <property type="entry name" value="ATP-grasp fold, B domain"/>
    <property type="match status" value="1"/>
</dbReference>
<dbReference type="HAMAP" id="MF_01643">
    <property type="entry name" value="PurT"/>
    <property type="match status" value="1"/>
</dbReference>
<dbReference type="InterPro" id="IPR011761">
    <property type="entry name" value="ATP-grasp"/>
</dbReference>
<dbReference type="InterPro" id="IPR003135">
    <property type="entry name" value="ATP-grasp_carboxylate-amine"/>
</dbReference>
<dbReference type="InterPro" id="IPR013815">
    <property type="entry name" value="ATP_grasp_subdomain_1"/>
</dbReference>
<dbReference type="InterPro" id="IPR016185">
    <property type="entry name" value="PreATP-grasp_dom_sf"/>
</dbReference>
<dbReference type="InterPro" id="IPR005862">
    <property type="entry name" value="PurT"/>
</dbReference>
<dbReference type="InterPro" id="IPR054350">
    <property type="entry name" value="PurT/PurK_preATP-grasp"/>
</dbReference>
<dbReference type="InterPro" id="IPR048740">
    <property type="entry name" value="PurT_C"/>
</dbReference>
<dbReference type="InterPro" id="IPR011054">
    <property type="entry name" value="Rudment_hybrid_motif"/>
</dbReference>
<dbReference type="NCBIfam" id="NF006766">
    <property type="entry name" value="PRK09288.1"/>
    <property type="match status" value="1"/>
</dbReference>
<dbReference type="NCBIfam" id="TIGR01142">
    <property type="entry name" value="purT"/>
    <property type="match status" value="1"/>
</dbReference>
<dbReference type="PANTHER" id="PTHR43055">
    <property type="entry name" value="FORMATE-DEPENDENT PHOSPHORIBOSYLGLYCINAMIDE FORMYLTRANSFERASE"/>
    <property type="match status" value="1"/>
</dbReference>
<dbReference type="PANTHER" id="PTHR43055:SF1">
    <property type="entry name" value="FORMATE-DEPENDENT PHOSPHORIBOSYLGLYCINAMIDE FORMYLTRANSFERASE"/>
    <property type="match status" value="1"/>
</dbReference>
<dbReference type="Pfam" id="PF02222">
    <property type="entry name" value="ATP-grasp"/>
    <property type="match status" value="1"/>
</dbReference>
<dbReference type="Pfam" id="PF21244">
    <property type="entry name" value="PurT_C"/>
    <property type="match status" value="1"/>
</dbReference>
<dbReference type="Pfam" id="PF22660">
    <property type="entry name" value="RS_preATP-grasp-like"/>
    <property type="match status" value="1"/>
</dbReference>
<dbReference type="SUPFAM" id="SSF56059">
    <property type="entry name" value="Glutathione synthetase ATP-binding domain-like"/>
    <property type="match status" value="1"/>
</dbReference>
<dbReference type="SUPFAM" id="SSF52440">
    <property type="entry name" value="PreATP-grasp domain"/>
    <property type="match status" value="1"/>
</dbReference>
<dbReference type="SUPFAM" id="SSF51246">
    <property type="entry name" value="Rudiment single hybrid motif"/>
    <property type="match status" value="1"/>
</dbReference>
<dbReference type="PROSITE" id="PS50975">
    <property type="entry name" value="ATP_GRASP"/>
    <property type="match status" value="1"/>
</dbReference>
<proteinExistence type="inferred from homology"/>
<feature type="chain" id="PRO_0000319281" description="Formate-dependent phosphoribosylglycinamide formyltransferase">
    <location>
        <begin position="1"/>
        <end position="388"/>
    </location>
</feature>
<feature type="domain" description="ATP-grasp" evidence="1">
    <location>
        <begin position="117"/>
        <end position="306"/>
    </location>
</feature>
<feature type="binding site" evidence="1">
    <location>
        <begin position="20"/>
        <end position="21"/>
    </location>
    <ligand>
        <name>N(1)-(5-phospho-beta-D-ribosyl)glycinamide</name>
        <dbReference type="ChEBI" id="CHEBI:143788"/>
    </ligand>
</feature>
<feature type="binding site" evidence="1">
    <location>
        <position position="80"/>
    </location>
    <ligand>
        <name>N(1)-(5-phospho-beta-D-ribosyl)glycinamide</name>
        <dbReference type="ChEBI" id="CHEBI:143788"/>
    </ligand>
</feature>
<feature type="binding site" evidence="1">
    <location>
        <position position="112"/>
    </location>
    <ligand>
        <name>ATP</name>
        <dbReference type="ChEBI" id="CHEBI:30616"/>
    </ligand>
</feature>
<feature type="binding site" evidence="1">
    <location>
        <position position="153"/>
    </location>
    <ligand>
        <name>ATP</name>
        <dbReference type="ChEBI" id="CHEBI:30616"/>
    </ligand>
</feature>
<feature type="binding site" evidence="1">
    <location>
        <begin position="158"/>
        <end position="163"/>
    </location>
    <ligand>
        <name>ATP</name>
        <dbReference type="ChEBI" id="CHEBI:30616"/>
    </ligand>
</feature>
<feature type="binding site" evidence="1">
    <location>
        <begin position="193"/>
        <end position="196"/>
    </location>
    <ligand>
        <name>ATP</name>
        <dbReference type="ChEBI" id="CHEBI:30616"/>
    </ligand>
</feature>
<feature type="binding site" evidence="1">
    <location>
        <position position="201"/>
    </location>
    <ligand>
        <name>ATP</name>
        <dbReference type="ChEBI" id="CHEBI:30616"/>
    </ligand>
</feature>
<feature type="binding site" evidence="1">
    <location>
        <position position="265"/>
    </location>
    <ligand>
        <name>Mg(2+)</name>
        <dbReference type="ChEBI" id="CHEBI:18420"/>
    </ligand>
</feature>
<feature type="binding site" evidence="1">
    <location>
        <position position="277"/>
    </location>
    <ligand>
        <name>Mg(2+)</name>
        <dbReference type="ChEBI" id="CHEBI:18420"/>
    </ligand>
</feature>
<feature type="binding site" evidence="1">
    <location>
        <position position="284"/>
    </location>
    <ligand>
        <name>N(1)-(5-phospho-beta-D-ribosyl)glycinamide</name>
        <dbReference type="ChEBI" id="CHEBI:143788"/>
    </ligand>
</feature>
<feature type="binding site" evidence="1">
    <location>
        <position position="352"/>
    </location>
    <ligand>
        <name>N(1)-(5-phospho-beta-D-ribosyl)glycinamide</name>
        <dbReference type="ChEBI" id="CHEBI:143788"/>
    </ligand>
</feature>
<feature type="binding site" evidence="1">
    <location>
        <begin position="359"/>
        <end position="360"/>
    </location>
    <ligand>
        <name>N(1)-(5-phospho-beta-D-ribosyl)glycinamide</name>
        <dbReference type="ChEBI" id="CHEBI:143788"/>
    </ligand>
</feature>
<reference key="1">
    <citation type="submission" date="2007-06" db="EMBL/GenBank/DDBJ databases">
        <title>Complete sequence of Methanococcus maripaludis C7.</title>
        <authorList>
            <consortium name="US DOE Joint Genome Institute"/>
            <person name="Copeland A."/>
            <person name="Lucas S."/>
            <person name="Lapidus A."/>
            <person name="Barry K."/>
            <person name="Glavina del Rio T."/>
            <person name="Dalin E."/>
            <person name="Tice H."/>
            <person name="Pitluck S."/>
            <person name="Clum A."/>
            <person name="Schmutz J."/>
            <person name="Larimer F."/>
            <person name="Land M."/>
            <person name="Hauser L."/>
            <person name="Kyrpides N."/>
            <person name="Anderson I."/>
            <person name="Sieprawska-Lupa M."/>
            <person name="Whitman W.B."/>
            <person name="Richardson P."/>
        </authorList>
    </citation>
    <scope>NUCLEOTIDE SEQUENCE [LARGE SCALE GENOMIC DNA]</scope>
    <source>
        <strain>C7 / ATCC BAA-1331</strain>
    </source>
</reference>
<accession>A6VIB2</accession>
<gene>
    <name evidence="1" type="primary">purT</name>
    <name type="ordered locus">MmarC7_1122</name>
</gene>
<comment type="function">
    <text evidence="1">Involved in the de novo purine biosynthesis. Catalyzes the transfer of formate to 5-phospho-ribosyl-glycinamide (GAR), producing 5-phospho-ribosyl-N-formylglycinamide (FGAR). Formate is provided by PurU via hydrolysis of 10-formyl-tetrahydrofolate.</text>
</comment>
<comment type="catalytic activity">
    <reaction evidence="1">
        <text>N(1)-(5-phospho-beta-D-ribosyl)glycinamide + formate + ATP = N(2)-formyl-N(1)-(5-phospho-beta-D-ribosyl)glycinamide + ADP + phosphate + H(+)</text>
        <dbReference type="Rhea" id="RHEA:24829"/>
        <dbReference type="ChEBI" id="CHEBI:15378"/>
        <dbReference type="ChEBI" id="CHEBI:15740"/>
        <dbReference type="ChEBI" id="CHEBI:30616"/>
        <dbReference type="ChEBI" id="CHEBI:43474"/>
        <dbReference type="ChEBI" id="CHEBI:143788"/>
        <dbReference type="ChEBI" id="CHEBI:147286"/>
        <dbReference type="ChEBI" id="CHEBI:456216"/>
        <dbReference type="EC" id="6.3.1.21"/>
    </reaction>
    <physiologicalReaction direction="left-to-right" evidence="1">
        <dbReference type="Rhea" id="RHEA:24830"/>
    </physiologicalReaction>
</comment>
<comment type="pathway">
    <text evidence="1">Purine metabolism; IMP biosynthesis via de novo pathway; N(2)-formyl-N(1)-(5-phospho-D-ribosyl)glycinamide from N(1)-(5-phospho-D-ribosyl)glycinamide (formate route): step 1/1.</text>
</comment>
<comment type="subunit">
    <text evidence="1">Homodimer.</text>
</comment>
<comment type="similarity">
    <text evidence="1">Belongs to the PurK/PurT family.</text>
</comment>
<protein>
    <recommendedName>
        <fullName evidence="1">Formate-dependent phosphoribosylglycinamide formyltransferase</fullName>
        <ecNumber evidence="1">6.3.1.21</ecNumber>
    </recommendedName>
    <alternativeName>
        <fullName evidence="1">5'-phosphoribosylglycinamide transformylase 2</fullName>
    </alternativeName>
    <alternativeName>
        <fullName evidence="1">Formate-dependent GAR transformylase</fullName>
    </alternativeName>
    <alternativeName>
        <fullName evidence="1">GAR transformylase 2</fullName>
        <shortName evidence="1">GART 2</shortName>
    </alternativeName>
    <alternativeName>
        <fullName evidence="1">Non-folate glycinamide ribonucleotide transformylase</fullName>
    </alternativeName>
    <alternativeName>
        <fullName evidence="1">Phosphoribosylglycinamide formyltransferase 2</fullName>
    </alternativeName>
</protein>
<sequence>MVGTPLFSNAKKILLLGSGELGKEVIIEAQRFGVECIAVDSYENAPAMQVAHRFHVIDMKDGGALRAVIEREKPDLIVPEIEAINTDTLKELETEGYHVVPTANATKLTMDREGIRRLAFEKLGLRTAKYEFAESLEELKEAVQRIGIPCVIKPIMSSSGKGQSTIKSERDIEKSWDYAKSAARGIGTKVIVEEFIKFDYEITLLTARTSEGTKFCEPIGHIQIDGDYHESWQPHPMCAPTKAKAQEMAKKITDELGGYGIFGVELFVLDDEVIFSEVSPRPHDTGMVTMVTQKMSEFEIHARAILGLPVNVDILFPGASHVIKSEILKWAPEYEIHEASKVKDTKIRLFGKPIAKVGRRMGVALAVSDDITKARENAEKAAHLVNIK</sequence>
<evidence type="ECO:0000255" key="1">
    <source>
        <dbReference type="HAMAP-Rule" id="MF_01643"/>
    </source>
</evidence>
<keyword id="KW-0067">ATP-binding</keyword>
<keyword id="KW-0436">Ligase</keyword>
<keyword id="KW-0460">Magnesium</keyword>
<keyword id="KW-0479">Metal-binding</keyword>
<keyword id="KW-0547">Nucleotide-binding</keyword>
<keyword id="KW-0658">Purine biosynthesis</keyword>